<proteinExistence type="inferred from homology"/>
<evidence type="ECO:0000255" key="1">
    <source>
        <dbReference type="HAMAP-Rule" id="MF_00523"/>
    </source>
</evidence>
<name>LPXD_SYNE7</name>
<feature type="chain" id="PRO_0000264447" description="UDP-3-O-acylglucosamine N-acyltransferase">
    <location>
        <begin position="1"/>
        <end position="355"/>
    </location>
</feature>
<feature type="active site" description="Proton acceptor" evidence="1">
    <location>
        <position position="248"/>
    </location>
</feature>
<organism>
    <name type="scientific">Synechococcus elongatus (strain ATCC 33912 / PCC 7942 / FACHB-805)</name>
    <name type="common">Anacystis nidulans R2</name>
    <dbReference type="NCBI Taxonomy" id="1140"/>
    <lineage>
        <taxon>Bacteria</taxon>
        <taxon>Bacillati</taxon>
        <taxon>Cyanobacteriota</taxon>
        <taxon>Cyanophyceae</taxon>
        <taxon>Synechococcales</taxon>
        <taxon>Synechococcaceae</taxon>
        <taxon>Synechococcus</taxon>
    </lineage>
</organism>
<keyword id="KW-0012">Acyltransferase</keyword>
<keyword id="KW-0441">Lipid A biosynthesis</keyword>
<keyword id="KW-0444">Lipid biosynthesis</keyword>
<keyword id="KW-0443">Lipid metabolism</keyword>
<keyword id="KW-1185">Reference proteome</keyword>
<keyword id="KW-0677">Repeat</keyword>
<keyword id="KW-0808">Transferase</keyword>
<sequence>MRWSEFLQHLEAKTGPCTAKAIAGDPELHGVAAINEAQSGQVSFLDQESGLQDWIEQTAASALILPPDPALQARAEARNLPWMTTAQPRLAFAAAIAVFYQPFRPVAGIHPSAVIDPSAQLGDRVSVGAHVVIGANCVIGNDVILHANVVLYPGVSLGDRCQIHANSTIHERSQIGQDCVIHSGAVIGAEGFGFVPTASGWFKMEQSGIVVLEDGVEVGCNSAIDRPAVGETRIGAQTKLDNLVHIGHGCQIGKACAMAAQVGLAGGVEVGDRVILAGQVGVANRVKIGDRAIASSKSGIHGEIEAGAIVSGYPAIPNRQWLKTSAVYNRLPELYRSLRNLIRRVEVLEQDRPSS</sequence>
<dbReference type="EC" id="2.3.1.191" evidence="1"/>
<dbReference type="EMBL" id="CP000100">
    <property type="protein sequence ID" value="ABB57479.1"/>
    <property type="molecule type" value="Genomic_DNA"/>
</dbReference>
<dbReference type="RefSeq" id="WP_011242421.1">
    <property type="nucleotide sequence ID" value="NZ_JACJTX010000004.1"/>
</dbReference>
<dbReference type="SMR" id="Q31N90"/>
<dbReference type="STRING" id="1140.Synpcc7942_1449"/>
<dbReference type="PaxDb" id="1140-Synpcc7942_1449"/>
<dbReference type="GeneID" id="72430312"/>
<dbReference type="KEGG" id="syf:Synpcc7942_1449"/>
<dbReference type="eggNOG" id="COG1044">
    <property type="taxonomic scope" value="Bacteria"/>
</dbReference>
<dbReference type="HOGENOM" id="CLU_049865_0_0_3"/>
<dbReference type="OrthoDB" id="9784739at2"/>
<dbReference type="BioCyc" id="SYNEL:SYNPCC7942_1449-MONOMER"/>
<dbReference type="UniPathway" id="UPA00973"/>
<dbReference type="Proteomes" id="UP000889800">
    <property type="component" value="Chromosome"/>
</dbReference>
<dbReference type="GO" id="GO:0031470">
    <property type="term" value="C:carboxysome"/>
    <property type="evidence" value="ECO:0007669"/>
    <property type="project" value="UniProtKB-ARBA"/>
</dbReference>
<dbReference type="GO" id="GO:0016020">
    <property type="term" value="C:membrane"/>
    <property type="evidence" value="ECO:0007669"/>
    <property type="project" value="GOC"/>
</dbReference>
<dbReference type="GO" id="GO:0016410">
    <property type="term" value="F:N-acyltransferase activity"/>
    <property type="evidence" value="ECO:0007669"/>
    <property type="project" value="InterPro"/>
</dbReference>
<dbReference type="GO" id="GO:0043886">
    <property type="term" value="F:structural constituent of carboxysome shell"/>
    <property type="evidence" value="ECO:0007669"/>
    <property type="project" value="UniProtKB-ARBA"/>
</dbReference>
<dbReference type="GO" id="GO:0009245">
    <property type="term" value="P:lipid A biosynthetic process"/>
    <property type="evidence" value="ECO:0007669"/>
    <property type="project" value="UniProtKB-UniRule"/>
</dbReference>
<dbReference type="CDD" id="cd03352">
    <property type="entry name" value="LbH_LpxD"/>
    <property type="match status" value="1"/>
</dbReference>
<dbReference type="Gene3D" id="2.160.10.10">
    <property type="entry name" value="Hexapeptide repeat proteins"/>
    <property type="match status" value="1"/>
</dbReference>
<dbReference type="Gene3D" id="3.40.1390.10">
    <property type="entry name" value="MurE/MurF, N-terminal domain"/>
    <property type="match status" value="1"/>
</dbReference>
<dbReference type="HAMAP" id="MF_00523">
    <property type="entry name" value="LpxD"/>
    <property type="match status" value="1"/>
</dbReference>
<dbReference type="InterPro" id="IPR001451">
    <property type="entry name" value="Hexapep"/>
</dbReference>
<dbReference type="InterPro" id="IPR007691">
    <property type="entry name" value="LpxD"/>
</dbReference>
<dbReference type="InterPro" id="IPR011004">
    <property type="entry name" value="Trimer_LpxA-like_sf"/>
</dbReference>
<dbReference type="InterPro" id="IPR020573">
    <property type="entry name" value="UDP_GlcNAc_AcTrfase_non-rep"/>
</dbReference>
<dbReference type="NCBIfam" id="TIGR01853">
    <property type="entry name" value="lipid_A_lpxD"/>
    <property type="match status" value="1"/>
</dbReference>
<dbReference type="NCBIfam" id="NF002060">
    <property type="entry name" value="PRK00892.1"/>
    <property type="match status" value="1"/>
</dbReference>
<dbReference type="PANTHER" id="PTHR43378">
    <property type="entry name" value="UDP-3-O-ACYLGLUCOSAMINE N-ACYLTRANSFERASE"/>
    <property type="match status" value="1"/>
</dbReference>
<dbReference type="PANTHER" id="PTHR43378:SF2">
    <property type="entry name" value="UDP-3-O-ACYLGLUCOSAMINE N-ACYLTRANSFERASE 1, MITOCHONDRIAL-RELATED"/>
    <property type="match status" value="1"/>
</dbReference>
<dbReference type="Pfam" id="PF00132">
    <property type="entry name" value="Hexapep"/>
    <property type="match status" value="1"/>
</dbReference>
<dbReference type="Pfam" id="PF04613">
    <property type="entry name" value="LpxD"/>
    <property type="match status" value="1"/>
</dbReference>
<dbReference type="SUPFAM" id="SSF51161">
    <property type="entry name" value="Trimeric LpxA-like enzymes"/>
    <property type="match status" value="1"/>
</dbReference>
<gene>
    <name evidence="1" type="primary">lpxD</name>
    <name type="ordered locus">Synpcc7942_1449</name>
</gene>
<protein>
    <recommendedName>
        <fullName evidence="1">UDP-3-O-acylglucosamine N-acyltransferase</fullName>
        <ecNumber evidence="1">2.3.1.191</ecNumber>
    </recommendedName>
</protein>
<comment type="function">
    <text evidence="1">Catalyzes the N-acylation of UDP-3-O-acylglucosamine using 3-hydroxyacyl-ACP as the acyl donor. Is involved in the biosynthesis of lipid A, a phosphorylated glycolipid that anchors the lipopolysaccharide to the outer membrane of the cell.</text>
</comment>
<comment type="catalytic activity">
    <reaction evidence="1">
        <text>a UDP-3-O-[(3R)-3-hydroxyacyl]-alpha-D-glucosamine + a (3R)-hydroxyacyl-[ACP] = a UDP-2-N,3-O-bis[(3R)-3-hydroxyacyl]-alpha-D-glucosamine + holo-[ACP] + H(+)</text>
        <dbReference type="Rhea" id="RHEA:53836"/>
        <dbReference type="Rhea" id="RHEA-COMP:9685"/>
        <dbReference type="Rhea" id="RHEA-COMP:9945"/>
        <dbReference type="ChEBI" id="CHEBI:15378"/>
        <dbReference type="ChEBI" id="CHEBI:64479"/>
        <dbReference type="ChEBI" id="CHEBI:78827"/>
        <dbReference type="ChEBI" id="CHEBI:137740"/>
        <dbReference type="ChEBI" id="CHEBI:137748"/>
        <dbReference type="EC" id="2.3.1.191"/>
    </reaction>
</comment>
<comment type="pathway">
    <text evidence="1">Bacterial outer membrane biogenesis; LPS lipid A biosynthesis.</text>
</comment>
<comment type="subunit">
    <text evidence="1">Homotrimer.</text>
</comment>
<comment type="similarity">
    <text evidence="1">Belongs to the transferase hexapeptide repeat family. LpxD subfamily.</text>
</comment>
<accession>Q31N90</accession>
<reference key="1">
    <citation type="submission" date="2005-08" db="EMBL/GenBank/DDBJ databases">
        <title>Complete sequence of chromosome 1 of Synechococcus elongatus PCC 7942.</title>
        <authorList>
            <consortium name="US DOE Joint Genome Institute"/>
            <person name="Copeland A."/>
            <person name="Lucas S."/>
            <person name="Lapidus A."/>
            <person name="Barry K."/>
            <person name="Detter J.C."/>
            <person name="Glavina T."/>
            <person name="Hammon N."/>
            <person name="Israni S."/>
            <person name="Pitluck S."/>
            <person name="Schmutz J."/>
            <person name="Larimer F."/>
            <person name="Land M."/>
            <person name="Kyrpides N."/>
            <person name="Lykidis A."/>
            <person name="Golden S."/>
            <person name="Richardson P."/>
        </authorList>
    </citation>
    <scope>NUCLEOTIDE SEQUENCE [LARGE SCALE GENOMIC DNA]</scope>
    <source>
        <strain>ATCC 33912 / PCC 7942 / FACHB-805</strain>
    </source>
</reference>